<feature type="chain" id="PRO_1000083378" description="Large ribosomal subunit protein uL11">
    <location>
        <begin position="1"/>
        <end position="145"/>
    </location>
</feature>
<protein>
    <recommendedName>
        <fullName evidence="1">Large ribosomal subunit protein uL11</fullName>
    </recommendedName>
    <alternativeName>
        <fullName evidence="2">50S ribosomal protein L11</fullName>
    </alternativeName>
</protein>
<accession>A9NAL0</accession>
<gene>
    <name evidence="1" type="primary">rplK</name>
    <name type="ordered locus">COXBURSA331_A0323</name>
</gene>
<dbReference type="EMBL" id="CP000890">
    <property type="protein sequence ID" value="ABX78890.1"/>
    <property type="molecule type" value="Genomic_DNA"/>
</dbReference>
<dbReference type="RefSeq" id="WP_005771614.1">
    <property type="nucleotide sequence ID" value="NC_010117.1"/>
</dbReference>
<dbReference type="SMR" id="A9NAL0"/>
<dbReference type="KEGG" id="cbs:COXBURSA331_A0323"/>
<dbReference type="HOGENOM" id="CLU_074237_2_0_6"/>
<dbReference type="GO" id="GO:0022625">
    <property type="term" value="C:cytosolic large ribosomal subunit"/>
    <property type="evidence" value="ECO:0007669"/>
    <property type="project" value="TreeGrafter"/>
</dbReference>
<dbReference type="GO" id="GO:0070180">
    <property type="term" value="F:large ribosomal subunit rRNA binding"/>
    <property type="evidence" value="ECO:0007669"/>
    <property type="project" value="UniProtKB-UniRule"/>
</dbReference>
<dbReference type="GO" id="GO:0003735">
    <property type="term" value="F:structural constituent of ribosome"/>
    <property type="evidence" value="ECO:0007669"/>
    <property type="project" value="InterPro"/>
</dbReference>
<dbReference type="GO" id="GO:0006412">
    <property type="term" value="P:translation"/>
    <property type="evidence" value="ECO:0007669"/>
    <property type="project" value="UniProtKB-UniRule"/>
</dbReference>
<dbReference type="CDD" id="cd00349">
    <property type="entry name" value="Ribosomal_L11"/>
    <property type="match status" value="1"/>
</dbReference>
<dbReference type="FunFam" id="1.10.10.250:FF:000001">
    <property type="entry name" value="50S ribosomal protein L11"/>
    <property type="match status" value="1"/>
</dbReference>
<dbReference type="FunFam" id="3.30.1550.10:FF:000013">
    <property type="entry name" value="50S ribosomal protein L11"/>
    <property type="match status" value="1"/>
</dbReference>
<dbReference type="Gene3D" id="1.10.10.250">
    <property type="entry name" value="Ribosomal protein L11, C-terminal domain"/>
    <property type="match status" value="1"/>
</dbReference>
<dbReference type="Gene3D" id="3.30.1550.10">
    <property type="entry name" value="Ribosomal protein L11/L12, N-terminal domain"/>
    <property type="match status" value="1"/>
</dbReference>
<dbReference type="HAMAP" id="MF_00736">
    <property type="entry name" value="Ribosomal_uL11"/>
    <property type="match status" value="1"/>
</dbReference>
<dbReference type="InterPro" id="IPR000911">
    <property type="entry name" value="Ribosomal_uL11"/>
</dbReference>
<dbReference type="InterPro" id="IPR006519">
    <property type="entry name" value="Ribosomal_uL11_bac-typ"/>
</dbReference>
<dbReference type="InterPro" id="IPR020783">
    <property type="entry name" value="Ribosomal_uL11_C"/>
</dbReference>
<dbReference type="InterPro" id="IPR036769">
    <property type="entry name" value="Ribosomal_uL11_C_sf"/>
</dbReference>
<dbReference type="InterPro" id="IPR020785">
    <property type="entry name" value="Ribosomal_uL11_CS"/>
</dbReference>
<dbReference type="InterPro" id="IPR020784">
    <property type="entry name" value="Ribosomal_uL11_N"/>
</dbReference>
<dbReference type="InterPro" id="IPR036796">
    <property type="entry name" value="Ribosomal_uL11_N_sf"/>
</dbReference>
<dbReference type="NCBIfam" id="TIGR01632">
    <property type="entry name" value="L11_bact"/>
    <property type="match status" value="1"/>
</dbReference>
<dbReference type="PANTHER" id="PTHR11661">
    <property type="entry name" value="60S RIBOSOMAL PROTEIN L12"/>
    <property type="match status" value="1"/>
</dbReference>
<dbReference type="PANTHER" id="PTHR11661:SF1">
    <property type="entry name" value="LARGE RIBOSOMAL SUBUNIT PROTEIN UL11M"/>
    <property type="match status" value="1"/>
</dbReference>
<dbReference type="Pfam" id="PF00298">
    <property type="entry name" value="Ribosomal_L11"/>
    <property type="match status" value="1"/>
</dbReference>
<dbReference type="Pfam" id="PF03946">
    <property type="entry name" value="Ribosomal_L11_N"/>
    <property type="match status" value="1"/>
</dbReference>
<dbReference type="SMART" id="SM00649">
    <property type="entry name" value="RL11"/>
    <property type="match status" value="1"/>
</dbReference>
<dbReference type="SUPFAM" id="SSF54747">
    <property type="entry name" value="Ribosomal L11/L12e N-terminal domain"/>
    <property type="match status" value="1"/>
</dbReference>
<dbReference type="SUPFAM" id="SSF46906">
    <property type="entry name" value="Ribosomal protein L11, C-terminal domain"/>
    <property type="match status" value="1"/>
</dbReference>
<dbReference type="PROSITE" id="PS00359">
    <property type="entry name" value="RIBOSOMAL_L11"/>
    <property type="match status" value="1"/>
</dbReference>
<proteinExistence type="inferred from homology"/>
<name>RL11_COXBR</name>
<sequence length="145" mass="15523">MAKKITGYIRLQIKAGEANPSPPVGPALGQHGVNIREFCESFNTATKNIEKGLPTPVIITVYADRTFSFITKTPPASVLLKKFVLKGKSGSARPNTEKVGKATRQQLEEIAKMKTPDLTAADLEAAIRTIAGTARSMGIDVEGVE</sequence>
<keyword id="KW-0488">Methylation</keyword>
<keyword id="KW-0687">Ribonucleoprotein</keyword>
<keyword id="KW-0689">Ribosomal protein</keyword>
<keyword id="KW-0694">RNA-binding</keyword>
<keyword id="KW-0699">rRNA-binding</keyword>
<reference key="1">
    <citation type="submission" date="2007-11" db="EMBL/GenBank/DDBJ databases">
        <title>Genome sequencing of phylogenetically and phenotypically diverse Coxiella burnetii isolates.</title>
        <authorList>
            <person name="Seshadri R."/>
            <person name="Samuel J.E."/>
        </authorList>
    </citation>
    <scope>NUCLEOTIDE SEQUENCE [LARGE SCALE GENOMIC DNA]</scope>
    <source>
        <strain>RSA 331 / Henzerling II</strain>
    </source>
</reference>
<organism>
    <name type="scientific">Coxiella burnetii (strain RSA 331 / Henzerling II)</name>
    <dbReference type="NCBI Taxonomy" id="360115"/>
    <lineage>
        <taxon>Bacteria</taxon>
        <taxon>Pseudomonadati</taxon>
        <taxon>Pseudomonadota</taxon>
        <taxon>Gammaproteobacteria</taxon>
        <taxon>Legionellales</taxon>
        <taxon>Coxiellaceae</taxon>
        <taxon>Coxiella</taxon>
    </lineage>
</organism>
<comment type="function">
    <text evidence="1">Forms part of the ribosomal stalk which helps the ribosome interact with GTP-bound translation factors.</text>
</comment>
<comment type="subunit">
    <text evidence="1">Part of the ribosomal stalk of the 50S ribosomal subunit. Interacts with L10 and the large rRNA to form the base of the stalk. L10 forms an elongated spine to which L12 dimers bind in a sequential fashion forming a multimeric L10(L12)X complex.</text>
</comment>
<comment type="PTM">
    <text evidence="1">One or more lysine residues are methylated.</text>
</comment>
<comment type="similarity">
    <text evidence="1">Belongs to the universal ribosomal protein uL11 family.</text>
</comment>
<evidence type="ECO:0000255" key="1">
    <source>
        <dbReference type="HAMAP-Rule" id="MF_00736"/>
    </source>
</evidence>
<evidence type="ECO:0000305" key="2"/>